<proteinExistence type="evidence at transcript level"/>
<keyword id="KW-1003">Cell membrane</keyword>
<keyword id="KW-0217">Developmental protein</keyword>
<keyword id="KW-0325">Glycoprotein</keyword>
<keyword id="KW-0472">Membrane</keyword>
<keyword id="KW-1185">Reference proteome</keyword>
<keyword id="KW-0812">Transmembrane</keyword>
<keyword id="KW-1133">Transmembrane helix</keyword>
<name>DVL16_ARATH</name>
<gene>
    <name evidence="7" type="primary">DVL16</name>
    <name evidence="8" type="synonym">ROT4</name>
    <name evidence="10" type="ordered locus">At2g36985</name>
    <name evidence="11" type="ORF">T1J8</name>
</gene>
<comment type="function">
    <text evidence="3 4 5 6">Small polypeptide acting as a regulatory molecule which coordinates cellular responses required for differentiation, growth and development, probably by restricting polar cell proliferation in lateral organs (e.g. leaves) and coordinating socket cell recruitment and differentiation at trichome sites (PubMed:15125775, PubMed:20826883, PubMed:25701405, Ref.6). Regulates the positional cue and cell proliferation along the body axis (PubMed:20826883).</text>
</comment>
<comment type="subcellular location">
    <subcellularLocation>
        <location evidence="3 4">Cell membrane</location>
        <topology evidence="1">Single-pass membrane protein</topology>
    </subcellularLocation>
</comment>
<comment type="tissue specificity">
    <text evidence="3">Mostly expressed in stems, flower buds, flowers and seedling shoots, to a lesser extent, in roots and young cauline leaves, but not in mature rosette leaves (PubMed:15125775). Barely observed in cotyledons and leaf primordia (PubMed:15125775).</text>
</comment>
<comment type="developmental stage">
    <text evidence="3">Expressed in the shoot apex and young developing leaves (PubMed:15125775). In seedlings, present in the shoot apical meristem and throughout the lamina of young leaves primordia (PubMed:15125775). In cotyledons, stems and mature leaves, restricted to the vasculature (PubMed:15125775). Weakly expressed floral meristem primordia (PubMed:15125775). During flower development, first observed in the center of the floral meristem, in the L3 and underlying cells (PubMed:15125775). In floral buds, observed at low levels in the center of floral meristems and accumulates progressively in sepals, petals and in the center of developing stamens (PubMed:15125775). In mature flowers, confined to the vasculature of all floral organs (PubMed:15125775).</text>
</comment>
<comment type="induction">
    <text evidence="3">Accumulates in seedlings within 6 days after a shift from dark to light.</text>
</comment>
<comment type="disruption phenotype">
    <text evidence="3">No visible phenotype.</text>
</comment>
<comment type="similarity">
    <text evidence="9">Belongs to the DVL/RTFL small polypeptides family.</text>
</comment>
<accession>Q7XXN8</accession>
<protein>
    <recommendedName>
        <fullName evidence="7">Small polypeptide DEVIL 16</fullName>
    </recommendedName>
    <alternativeName>
        <fullName evidence="8">Small polypeptide ROTUNDIFOLIA 4</fullName>
        <shortName evidence="8">Small polypeptide ROT-FOUR</shortName>
    </alternativeName>
</protein>
<sequence>MAPEENGTCEPCKTFGQKCSHVVKKQRAKFYILRRCIAMLVCWHDQNHDRKDS</sequence>
<dbReference type="EMBL" id="BK001759">
    <property type="protein sequence ID" value="DAA02287.1"/>
    <property type="molecule type" value="Genomic_DNA"/>
</dbReference>
<dbReference type="EMBL" id="AB107209">
    <property type="protein sequence ID" value="BAC78810.1"/>
    <property type="molecule type" value="mRNA"/>
</dbReference>
<dbReference type="EMBL" id="AC006922">
    <property type="status" value="NOT_ANNOTATED_CDS"/>
    <property type="molecule type" value="Genomic_DNA"/>
</dbReference>
<dbReference type="EMBL" id="CP002685">
    <property type="protein sequence ID" value="AEC09331.1"/>
    <property type="molecule type" value="Genomic_DNA"/>
</dbReference>
<dbReference type="EMBL" id="BT026004">
    <property type="protein sequence ID" value="ABG25093.1"/>
    <property type="molecule type" value="mRNA"/>
</dbReference>
<dbReference type="RefSeq" id="NP_973616.1">
    <property type="nucleotide sequence ID" value="NM_201887.2"/>
</dbReference>
<dbReference type="STRING" id="3702.Q7XXN8"/>
<dbReference type="GlyCosmos" id="Q7XXN8">
    <property type="glycosylation" value="1 site, No reported glycans"/>
</dbReference>
<dbReference type="GlyGen" id="Q7XXN8">
    <property type="glycosylation" value="1 site"/>
</dbReference>
<dbReference type="PaxDb" id="3702-AT2G36985.1"/>
<dbReference type="EnsemblPlants" id="AT2G36985.1">
    <property type="protein sequence ID" value="AT2G36985.1"/>
    <property type="gene ID" value="AT2G36985"/>
</dbReference>
<dbReference type="GeneID" id="2745585"/>
<dbReference type="Gramene" id="AT2G36985.1">
    <property type="protein sequence ID" value="AT2G36985.1"/>
    <property type="gene ID" value="AT2G36985"/>
</dbReference>
<dbReference type="KEGG" id="ath:AT2G36985"/>
<dbReference type="Araport" id="AT2G36985"/>
<dbReference type="TAIR" id="AT2G36985">
    <property type="gene designation" value="ROT4"/>
</dbReference>
<dbReference type="eggNOG" id="ENOG502SA97">
    <property type="taxonomic scope" value="Eukaryota"/>
</dbReference>
<dbReference type="HOGENOM" id="CLU_150897_4_2_1"/>
<dbReference type="InParanoid" id="Q7XXN8"/>
<dbReference type="OMA" id="MMQEDIN"/>
<dbReference type="OrthoDB" id="784420at2759"/>
<dbReference type="PhylomeDB" id="Q7XXN8"/>
<dbReference type="PRO" id="PR:Q7XXN8"/>
<dbReference type="Proteomes" id="UP000006548">
    <property type="component" value="Chromosome 2"/>
</dbReference>
<dbReference type="ExpressionAtlas" id="Q7XXN8">
    <property type="expression patterns" value="baseline and differential"/>
</dbReference>
<dbReference type="GO" id="GO:0005886">
    <property type="term" value="C:plasma membrane"/>
    <property type="evidence" value="ECO:0000314"/>
    <property type="project" value="TAIR"/>
</dbReference>
<dbReference type="GO" id="GO:0008285">
    <property type="term" value="P:negative regulation of cell population proliferation"/>
    <property type="evidence" value="ECO:0000315"/>
    <property type="project" value="UniProtKB"/>
</dbReference>
<dbReference type="GO" id="GO:0042127">
    <property type="term" value="P:regulation of cell population proliferation"/>
    <property type="evidence" value="ECO:0000315"/>
    <property type="project" value="UniProtKB"/>
</dbReference>
<dbReference type="GO" id="GO:0009416">
    <property type="term" value="P:response to light stimulus"/>
    <property type="evidence" value="ECO:0000270"/>
    <property type="project" value="UniProtKB"/>
</dbReference>
<dbReference type="GO" id="GO:0048367">
    <property type="term" value="P:shoot system development"/>
    <property type="evidence" value="ECO:0000315"/>
    <property type="project" value="UniProtKB"/>
</dbReference>
<dbReference type="InterPro" id="IPR012552">
    <property type="entry name" value="DVL"/>
</dbReference>
<dbReference type="InterPro" id="IPR051525">
    <property type="entry name" value="DVL_RTFL_regulatory"/>
</dbReference>
<dbReference type="PANTHER" id="PTHR33102">
    <property type="entry name" value="DVL19-RELATED-RELATED"/>
    <property type="match status" value="1"/>
</dbReference>
<dbReference type="Pfam" id="PF08137">
    <property type="entry name" value="DVL"/>
    <property type="match status" value="1"/>
</dbReference>
<reference key="1">
    <citation type="journal article" date="2004" name="Plant J.">
        <title>DVL, a novel class of small polypeptides: overexpression alters Arabidopsis development.</title>
        <authorList>
            <person name="Wen J."/>
            <person name="Lease K.A."/>
            <person name="Walker J.C."/>
        </authorList>
    </citation>
    <scope>NUCLEOTIDE SEQUENCE [GENOMIC DNA]</scope>
    <scope>GENE FAMILY</scope>
    <scope>NOMENCLATURE</scope>
    <source>
        <strain>cv. Columbia</strain>
    </source>
</reference>
<reference key="2">
    <citation type="journal article" date="2004" name="Plant J.">
        <title>Overexpression of a novel small peptide ROTUNDIFOLIA4 decreases cell proliferation and alters leaf shape in Arabidopsis thaliana.</title>
        <authorList>
            <person name="Narita N.N."/>
            <person name="Moore S."/>
            <person name="Horiguchi G."/>
            <person name="Kubo M."/>
            <person name="Demura T."/>
            <person name="Fukuda H."/>
            <person name="Goodrich J."/>
            <person name="Tsukaya H."/>
        </authorList>
    </citation>
    <scope>NUCLEOTIDE SEQUENCE [MRNA]</scope>
    <scope>FUNCTION</scope>
    <scope>DISRUPTION PHENOTYPE</scope>
    <scope>SUBCELLULAR LOCATION</scope>
    <scope>TISSUE SPECIFICITY</scope>
    <scope>DEVELOPMENTAL STAGE</scope>
    <scope>INDUCTION BY LIGHT</scope>
    <scope>GENE FAMILY</scope>
    <source>
        <strain>cv. Columbia</strain>
        <strain>cv. Landsberg erecta</strain>
    </source>
</reference>
<reference key="3">
    <citation type="journal article" date="1999" name="Nature">
        <title>Sequence and analysis of chromosome 2 of the plant Arabidopsis thaliana.</title>
        <authorList>
            <person name="Lin X."/>
            <person name="Kaul S."/>
            <person name="Rounsley S.D."/>
            <person name="Shea T.P."/>
            <person name="Benito M.-I."/>
            <person name="Town C.D."/>
            <person name="Fujii C.Y."/>
            <person name="Mason T.M."/>
            <person name="Bowman C.L."/>
            <person name="Barnstead M.E."/>
            <person name="Feldblyum T.V."/>
            <person name="Buell C.R."/>
            <person name="Ketchum K.A."/>
            <person name="Lee J.J."/>
            <person name="Ronning C.M."/>
            <person name="Koo H.L."/>
            <person name="Moffat K.S."/>
            <person name="Cronin L.A."/>
            <person name="Shen M."/>
            <person name="Pai G."/>
            <person name="Van Aken S."/>
            <person name="Umayam L."/>
            <person name="Tallon L.J."/>
            <person name="Gill J.E."/>
            <person name="Adams M.D."/>
            <person name="Carrera A.J."/>
            <person name="Creasy T.H."/>
            <person name="Goodman H.M."/>
            <person name="Somerville C.R."/>
            <person name="Copenhaver G.P."/>
            <person name="Preuss D."/>
            <person name="Nierman W.C."/>
            <person name="White O."/>
            <person name="Eisen J.A."/>
            <person name="Salzberg S.L."/>
            <person name="Fraser C.M."/>
            <person name="Venter J.C."/>
        </authorList>
    </citation>
    <scope>NUCLEOTIDE SEQUENCE [LARGE SCALE GENOMIC DNA]</scope>
    <source>
        <strain>cv. Columbia</strain>
    </source>
</reference>
<reference key="4">
    <citation type="journal article" date="2017" name="Plant J.">
        <title>Araport11: a complete reannotation of the Arabidopsis thaliana reference genome.</title>
        <authorList>
            <person name="Cheng C.Y."/>
            <person name="Krishnakumar V."/>
            <person name="Chan A.P."/>
            <person name="Thibaud-Nissen F."/>
            <person name="Schobel S."/>
            <person name="Town C.D."/>
        </authorList>
    </citation>
    <scope>GENOME REANNOTATION</scope>
    <source>
        <strain>cv. Columbia</strain>
    </source>
</reference>
<reference key="5">
    <citation type="submission" date="2006-06" db="EMBL/GenBank/DDBJ databases">
        <title>Arabidopsis ORF clones.</title>
        <authorList>
            <person name="Quinitio C."/>
            <person name="Chen H."/>
            <person name="Kim C.J."/>
            <person name="Shinn P."/>
            <person name="Ecker J.R."/>
        </authorList>
    </citation>
    <scope>NUCLEOTIDE SEQUENCE [LARGE SCALE MRNA]</scope>
    <source>
        <strain>cv. Columbia</strain>
    </source>
</reference>
<reference key="6">
    <citation type="journal article" date="2010" name="Plant Mol. Biol. Rep.">
        <title>Interactions between a NAC-domain transcription factor and the putative small protein encoding DVL/ROT gene family.</title>
        <authorList>
            <person name="Larue C.T."/>
            <person name="Wen J."/>
            <person name="Walker J.C."/>
        </authorList>
    </citation>
    <scope>FUNCTION</scope>
    <source>
        <strain>cv. Columbia</strain>
    </source>
</reference>
<reference key="7">
    <citation type="journal article" date="2011" name="Plant Cell Physiol.">
        <title>ROTUNDIFOLIA4 regulates cell proliferation along the body axis in Arabidopsis shoot.</title>
        <authorList>
            <person name="Ikeuchi M."/>
            <person name="Yamaguchi T."/>
            <person name="Kazama T."/>
            <person name="Ito T."/>
            <person name="Horiguchi G."/>
            <person name="Tsukaya H."/>
        </authorList>
    </citation>
    <scope>FUNCTION</scope>
    <scope>SUBCELLULAR LOCATION</scope>
    <source>
        <strain>cv. Columbia</strain>
    </source>
</reference>
<reference key="8">
    <citation type="journal article" date="2015" name="J. Plant Res.">
        <title>Comparative analysis of the RTFL peptide family on the control of plant organogenesis.</title>
        <authorList>
            <person name="Guo P."/>
            <person name="Yoshimura A."/>
            <person name="Ishikawa N."/>
            <person name="Yamaguchi T."/>
            <person name="Guo Y."/>
            <person name="Tsukaya H."/>
        </authorList>
    </citation>
    <scope>FUNCTION</scope>
    <scope>REVIEW</scope>
    <scope>GENE FAMILY</scope>
    <scope>NOMENCLATURE</scope>
    <source>
        <strain>cv. Columbia</strain>
    </source>
</reference>
<evidence type="ECO:0000255" key="1"/>
<evidence type="ECO:0000255" key="2">
    <source>
        <dbReference type="PROSITE-ProRule" id="PRU00498"/>
    </source>
</evidence>
<evidence type="ECO:0000269" key="3">
    <source>
    </source>
</evidence>
<evidence type="ECO:0000269" key="4">
    <source>
    </source>
</evidence>
<evidence type="ECO:0000269" key="5">
    <source>
    </source>
</evidence>
<evidence type="ECO:0000269" key="6">
    <source ref="6"/>
</evidence>
<evidence type="ECO:0000303" key="7">
    <source>
    </source>
</evidence>
<evidence type="ECO:0000303" key="8">
    <source>
    </source>
</evidence>
<evidence type="ECO:0000305" key="9"/>
<evidence type="ECO:0000312" key="10">
    <source>
        <dbReference type="Araport" id="AT2G36985"/>
    </source>
</evidence>
<evidence type="ECO:0000312" key="11">
    <source>
        <dbReference type="EMBL" id="AC006922"/>
    </source>
</evidence>
<feature type="chain" id="PRO_0000452784" description="Small polypeptide DEVIL 16">
    <location>
        <begin position="1"/>
        <end position="53"/>
    </location>
</feature>
<feature type="transmembrane region" description="Helical" evidence="1">
    <location>
        <begin position="30"/>
        <end position="46"/>
    </location>
</feature>
<feature type="region of interest" description="Required for DVL/RTFL small polypeptide activity" evidence="3 4">
    <location>
        <begin position="14"/>
        <end position="45"/>
    </location>
</feature>
<feature type="glycosylation site" description="N-linked (GlcNAc...) asparagine" evidence="2">
    <location>
        <position position="6"/>
    </location>
</feature>
<organism>
    <name type="scientific">Arabidopsis thaliana</name>
    <name type="common">Mouse-ear cress</name>
    <dbReference type="NCBI Taxonomy" id="3702"/>
    <lineage>
        <taxon>Eukaryota</taxon>
        <taxon>Viridiplantae</taxon>
        <taxon>Streptophyta</taxon>
        <taxon>Embryophyta</taxon>
        <taxon>Tracheophyta</taxon>
        <taxon>Spermatophyta</taxon>
        <taxon>Magnoliopsida</taxon>
        <taxon>eudicotyledons</taxon>
        <taxon>Gunneridae</taxon>
        <taxon>Pentapetalae</taxon>
        <taxon>rosids</taxon>
        <taxon>malvids</taxon>
        <taxon>Brassicales</taxon>
        <taxon>Brassicaceae</taxon>
        <taxon>Camelineae</taxon>
        <taxon>Arabidopsis</taxon>
    </lineage>
</organism>